<keyword id="KW-1003">Cell membrane</keyword>
<keyword id="KW-0966">Cell projection</keyword>
<keyword id="KW-0343">GTPase activation</keyword>
<keyword id="KW-0472">Membrane</keyword>
<keyword id="KW-0539">Nucleus</keyword>
<keyword id="KW-0597">Phosphoprotein</keyword>
<keyword id="KW-1185">Reference proteome</keyword>
<keyword id="KW-0734">Signal transduction inhibitor</keyword>
<reference key="1">
    <citation type="journal article" date="2002" name="Genome Biol.">
        <title>Prediction of unidentified human genes on the basis of sequence similarity to novel cDNAs from cynomolgus monkey brain.</title>
        <authorList>
            <person name="Osada N."/>
            <person name="Hida M."/>
            <person name="Kusuda J."/>
            <person name="Tanuma R."/>
            <person name="Hirata M."/>
            <person name="Hirai M."/>
            <person name="Terao K."/>
            <person name="Suzuki Y."/>
            <person name="Sugano S."/>
            <person name="Hashimoto K."/>
        </authorList>
    </citation>
    <scope>NUCLEOTIDE SEQUENCE [LARGE SCALE MRNA]</scope>
    <source>
        <tissue>Medulla oblongata</tissue>
    </source>
</reference>
<evidence type="ECO:0000250" key="1">
    <source>
        <dbReference type="UniProtKB" id="P49804"/>
    </source>
</evidence>
<evidence type="ECO:0000255" key="2">
    <source>
        <dbReference type="PROSITE-ProRule" id="PRU00171"/>
    </source>
</evidence>
<accession>Q95K68</accession>
<protein>
    <recommendedName>
        <fullName>Regulator of G-protein signaling 8</fullName>
        <shortName>RGS8</shortName>
    </recommendedName>
</protein>
<comment type="function">
    <text evidence="1">Regulates G protein-coupled receptor signaling cascades, including signaling via muscarinic acetylcholine receptor CHRM2 and dopamine receptor DRD2. Inhibits signal transduction by increasing the GTPase activity of G protein alpha subunits, thereby driving them into their inactive GDP-bound form. Modulates the activity of potassium channels that are activated in response to DRD2 and CHRM2 signaling.</text>
</comment>
<comment type="subunit">
    <text evidence="1">Interacts with GNAO1 and GNAI3.</text>
</comment>
<comment type="subcellular location">
    <subcellularLocation>
        <location evidence="1">Cell membrane</location>
        <topology evidence="1">Peripheral membrane protein</topology>
        <orientation evidence="1">Cytoplasmic side</orientation>
    </subcellularLocation>
    <subcellularLocation>
        <location evidence="1">Membrane</location>
        <topology evidence="1">Peripheral membrane protein</topology>
        <orientation evidence="1">Cytoplasmic side</orientation>
    </subcellularLocation>
    <subcellularLocation>
        <location evidence="1">Perikaryon</location>
    </subcellularLocation>
    <subcellularLocation>
        <location evidence="1">Cell projection</location>
        <location evidence="1">Dendrite</location>
    </subcellularLocation>
    <subcellularLocation>
        <location evidence="1">Nucleus</location>
    </subcellularLocation>
    <text evidence="1">Detected in Purkinje cell soma and dendrites. Associated with Purkinje cell membranes. Not detected in Purkinje cell nuclei. Detected in the nucleus after heterologous expression. Recruited to the cell membrane in the presence of GNAO1.</text>
</comment>
<feature type="chain" id="PRO_0000364203" description="Regulator of G-protein signaling 8">
    <location>
        <begin position="1"/>
        <end position="196"/>
    </location>
</feature>
<feature type="domain" description="RGS" evidence="2">
    <location>
        <begin position="72"/>
        <end position="188"/>
    </location>
</feature>
<feature type="modified residue" description="Phosphoserine" evidence="1">
    <location>
        <position position="26"/>
    </location>
</feature>
<proteinExistence type="evidence at transcript level"/>
<dbReference type="EMBL" id="AB066513">
    <property type="protein sequence ID" value="BAB62198.1"/>
    <property type="molecule type" value="mRNA"/>
</dbReference>
<dbReference type="SMR" id="Q95K68"/>
<dbReference type="STRING" id="9541.ENSMFAP00000021583"/>
<dbReference type="VEuPathDB" id="HostDB:ENSMFAG00000035700"/>
<dbReference type="eggNOG" id="KOG3589">
    <property type="taxonomic scope" value="Eukaryota"/>
</dbReference>
<dbReference type="OMA" id="MHQSTKL"/>
<dbReference type="Proteomes" id="UP000233100">
    <property type="component" value="Chromosome 1"/>
</dbReference>
<dbReference type="GO" id="GO:0009898">
    <property type="term" value="C:cytoplasmic side of plasma membrane"/>
    <property type="evidence" value="ECO:0000250"/>
    <property type="project" value="UniProtKB"/>
</dbReference>
<dbReference type="GO" id="GO:0030425">
    <property type="term" value="C:dendrite"/>
    <property type="evidence" value="ECO:0000250"/>
    <property type="project" value="UniProtKB"/>
</dbReference>
<dbReference type="GO" id="GO:0032809">
    <property type="term" value="C:neuronal cell body membrane"/>
    <property type="evidence" value="ECO:0000250"/>
    <property type="project" value="UniProtKB"/>
</dbReference>
<dbReference type="GO" id="GO:0005634">
    <property type="term" value="C:nucleus"/>
    <property type="evidence" value="ECO:0000250"/>
    <property type="project" value="UniProtKB"/>
</dbReference>
<dbReference type="GO" id="GO:0043204">
    <property type="term" value="C:perikaryon"/>
    <property type="evidence" value="ECO:0007669"/>
    <property type="project" value="UniProtKB-SubCell"/>
</dbReference>
<dbReference type="GO" id="GO:0045202">
    <property type="term" value="C:synapse"/>
    <property type="evidence" value="ECO:0007669"/>
    <property type="project" value="GOC"/>
</dbReference>
<dbReference type="GO" id="GO:0005096">
    <property type="term" value="F:GTPase activator activity"/>
    <property type="evidence" value="ECO:0000250"/>
    <property type="project" value="UniProtKB"/>
</dbReference>
<dbReference type="GO" id="GO:0003924">
    <property type="term" value="F:GTPase activity"/>
    <property type="evidence" value="ECO:0007669"/>
    <property type="project" value="UniProtKB-ARBA"/>
</dbReference>
<dbReference type="GO" id="GO:0007213">
    <property type="term" value="P:G protein-coupled acetylcholine receptor signaling pathway"/>
    <property type="evidence" value="ECO:0000250"/>
    <property type="project" value="UniProtKB"/>
</dbReference>
<dbReference type="GO" id="GO:0009968">
    <property type="term" value="P:negative regulation of signal transduction"/>
    <property type="evidence" value="ECO:0007669"/>
    <property type="project" value="UniProtKB-KW"/>
</dbReference>
<dbReference type="GO" id="GO:0043547">
    <property type="term" value="P:positive regulation of GTPase activity"/>
    <property type="evidence" value="ECO:0000250"/>
    <property type="project" value="UniProtKB"/>
</dbReference>
<dbReference type="GO" id="GO:0060159">
    <property type="term" value="P:regulation of dopamine receptor signaling pathway"/>
    <property type="evidence" value="ECO:0000250"/>
    <property type="project" value="UniProtKB"/>
</dbReference>
<dbReference type="CDD" id="cd08711">
    <property type="entry name" value="RGS_RGS8"/>
    <property type="match status" value="1"/>
</dbReference>
<dbReference type="FunFam" id="1.10.167.10:FF:000001">
    <property type="entry name" value="Putative regulator of g-protein signaling 12"/>
    <property type="match status" value="1"/>
</dbReference>
<dbReference type="FunFam" id="1.10.196.10:FF:000001">
    <property type="entry name" value="Regulator of G-protein signaling 8"/>
    <property type="match status" value="1"/>
</dbReference>
<dbReference type="Gene3D" id="1.10.196.10">
    <property type="match status" value="2"/>
</dbReference>
<dbReference type="Gene3D" id="1.10.167.10">
    <property type="entry name" value="Regulator of G-protein Signalling 4, domain 2"/>
    <property type="match status" value="1"/>
</dbReference>
<dbReference type="InterPro" id="IPR016137">
    <property type="entry name" value="RGS"/>
</dbReference>
<dbReference type="InterPro" id="IPR034949">
    <property type="entry name" value="RGS_RGS8"/>
</dbReference>
<dbReference type="InterPro" id="IPR036305">
    <property type="entry name" value="RGS_sf"/>
</dbReference>
<dbReference type="InterPro" id="IPR024066">
    <property type="entry name" value="RGS_subdom1/3"/>
</dbReference>
<dbReference type="InterPro" id="IPR044926">
    <property type="entry name" value="RGS_subdomain_2"/>
</dbReference>
<dbReference type="PANTHER" id="PTHR10845">
    <property type="entry name" value="REGULATOR OF G PROTEIN SIGNALING"/>
    <property type="match status" value="1"/>
</dbReference>
<dbReference type="PANTHER" id="PTHR10845:SF147">
    <property type="entry name" value="REGULATOR OF G-PROTEIN SIGNALING 8"/>
    <property type="match status" value="1"/>
</dbReference>
<dbReference type="Pfam" id="PF00615">
    <property type="entry name" value="RGS"/>
    <property type="match status" value="1"/>
</dbReference>
<dbReference type="PRINTS" id="PR01301">
    <property type="entry name" value="RGSPROTEIN"/>
</dbReference>
<dbReference type="SMART" id="SM00315">
    <property type="entry name" value="RGS"/>
    <property type="match status" value="1"/>
</dbReference>
<dbReference type="SUPFAM" id="SSF48097">
    <property type="entry name" value="Regulator of G-protein signaling, RGS"/>
    <property type="match status" value="1"/>
</dbReference>
<dbReference type="PROSITE" id="PS50132">
    <property type="entry name" value="RGS"/>
    <property type="match status" value="1"/>
</dbReference>
<gene>
    <name type="primary">RGS8</name>
    <name type="ORF">QmoA-10247</name>
</gene>
<organism>
    <name type="scientific">Macaca fascicularis</name>
    <name type="common">Crab-eating macaque</name>
    <name type="synonym">Cynomolgus monkey</name>
    <dbReference type="NCBI Taxonomy" id="9541"/>
    <lineage>
        <taxon>Eukaryota</taxon>
        <taxon>Metazoa</taxon>
        <taxon>Chordata</taxon>
        <taxon>Craniata</taxon>
        <taxon>Vertebrata</taxon>
        <taxon>Euteleostomi</taxon>
        <taxon>Mammalia</taxon>
        <taxon>Eutheria</taxon>
        <taxon>Euarchontoglires</taxon>
        <taxon>Primates</taxon>
        <taxon>Haplorrhini</taxon>
        <taxon>Catarrhini</taxon>
        <taxon>Cercopithecidae</taxon>
        <taxon>Cercopithecinae</taxon>
        <taxon>Macaca</taxon>
    </lineage>
</organism>
<name>RGS8_MACFA</name>
<sequence length="196" mass="22939">MAALLMPRRNKGMRTRLGCLSHKSDSCSDFTAILPDKPNRALNYLRMYKFTATELQESRRLSTEEATRWADSFDVLLSHKYGVAAFRAFLKTEFSEENLEFWLACEEFKKTRSTAKLVSKAHRIFEEFVDVQAPREVNIDFQTREATRKNMQEPSLTCFDQAQGKVHSLMEKDSYPRFLRSKMYLDLLSQSQRRLS</sequence>